<organism>
    <name type="scientific">Emericella nidulans (strain FGSC A4 / ATCC 38163 / CBS 112.46 / NRRL 194 / M139)</name>
    <name type="common">Aspergillus nidulans</name>
    <dbReference type="NCBI Taxonomy" id="227321"/>
    <lineage>
        <taxon>Eukaryota</taxon>
        <taxon>Fungi</taxon>
        <taxon>Dikarya</taxon>
        <taxon>Ascomycota</taxon>
        <taxon>Pezizomycotina</taxon>
        <taxon>Eurotiomycetes</taxon>
        <taxon>Eurotiomycetidae</taxon>
        <taxon>Eurotiales</taxon>
        <taxon>Aspergillaceae</taxon>
        <taxon>Aspergillus</taxon>
        <taxon>Aspergillus subgen. Nidulantes</taxon>
    </lineage>
</organism>
<dbReference type="EMBL" id="X79796">
    <property type="protein sequence ID" value="CAA56190.1"/>
    <property type="molecule type" value="Genomic_DNA"/>
</dbReference>
<dbReference type="EMBL" id="AACD01000112">
    <property type="protein sequence ID" value="EAA58548.1"/>
    <property type="molecule type" value="Genomic_DNA"/>
</dbReference>
<dbReference type="EMBL" id="BN001301">
    <property type="protein sequence ID" value="CBF71344.1"/>
    <property type="molecule type" value="Genomic_DNA"/>
</dbReference>
<dbReference type="PIR" id="A56382">
    <property type="entry name" value="A56382"/>
</dbReference>
<dbReference type="RefSeq" id="XP_664334.1">
    <property type="nucleotide sequence ID" value="XM_659242.1"/>
</dbReference>
<dbReference type="SMR" id="P48777"/>
<dbReference type="STRING" id="227321.P48777"/>
<dbReference type="TCDB" id="2.A.40.4.4">
    <property type="family name" value="the nucleobase/ascorbate transporter (nat) or nucleobase:cation symporter-2 (ncs2) family"/>
</dbReference>
<dbReference type="EnsemblFungi" id="CBF71344">
    <property type="protein sequence ID" value="CBF71344"/>
    <property type="gene ID" value="ANIA_06730"/>
</dbReference>
<dbReference type="KEGG" id="ani:ANIA_06730"/>
<dbReference type="VEuPathDB" id="FungiDB:AN6730"/>
<dbReference type="eggNOG" id="ENOG502QQD4">
    <property type="taxonomic scope" value="Eukaryota"/>
</dbReference>
<dbReference type="HOGENOM" id="CLU_017959_7_0_1"/>
<dbReference type="InParanoid" id="P48777"/>
<dbReference type="OMA" id="GLGFDWN"/>
<dbReference type="OrthoDB" id="1641903at2759"/>
<dbReference type="Proteomes" id="UP000000560">
    <property type="component" value="Chromosome I"/>
</dbReference>
<dbReference type="GO" id="GO:0000324">
    <property type="term" value="C:fungal-type vacuole"/>
    <property type="evidence" value="ECO:0000314"/>
    <property type="project" value="AspGD"/>
</dbReference>
<dbReference type="GO" id="GO:0005886">
    <property type="term" value="C:plasma membrane"/>
    <property type="evidence" value="ECO:0000314"/>
    <property type="project" value="AspGD"/>
</dbReference>
<dbReference type="GO" id="GO:0005345">
    <property type="term" value="F:purine nucleobase transmembrane transporter activity"/>
    <property type="evidence" value="ECO:0000315"/>
    <property type="project" value="AspGD"/>
</dbReference>
<dbReference type="GO" id="GO:0042907">
    <property type="term" value="F:xanthine transmembrane transporter activity"/>
    <property type="evidence" value="ECO:0000318"/>
    <property type="project" value="GO_Central"/>
</dbReference>
<dbReference type="GO" id="GO:0006863">
    <property type="term" value="P:purine nucleobase transport"/>
    <property type="evidence" value="ECO:0000315"/>
    <property type="project" value="AspGD"/>
</dbReference>
<dbReference type="GO" id="GO:0042906">
    <property type="term" value="P:xanthine transport"/>
    <property type="evidence" value="ECO:0000318"/>
    <property type="project" value="GO_Central"/>
</dbReference>
<dbReference type="InterPro" id="IPR006043">
    <property type="entry name" value="NCS2"/>
</dbReference>
<dbReference type="InterPro" id="IPR006042">
    <property type="entry name" value="Xan_ur_permease"/>
</dbReference>
<dbReference type="NCBIfam" id="TIGR00801">
    <property type="entry name" value="ncs2"/>
    <property type="match status" value="1"/>
</dbReference>
<dbReference type="PANTHER" id="PTHR42810">
    <property type="entry name" value="PURINE PERMEASE C1399.01C-RELATED"/>
    <property type="match status" value="1"/>
</dbReference>
<dbReference type="PANTHER" id="PTHR42810:SF2">
    <property type="entry name" value="PURINE PERMEASE C1399.01C-RELATED"/>
    <property type="match status" value="1"/>
</dbReference>
<dbReference type="Pfam" id="PF00860">
    <property type="entry name" value="Xan_ur_permease"/>
    <property type="match status" value="1"/>
</dbReference>
<dbReference type="PROSITE" id="PS01116">
    <property type="entry name" value="XANTH_URACIL_PERMASE"/>
    <property type="match status" value="1"/>
</dbReference>
<comment type="function">
    <text>Able to transport with low efficiency all natural purines as well as purine analogs.</text>
</comment>
<comment type="subcellular location">
    <subcellularLocation>
        <location>Membrane</location>
        <topology>Multi-pass membrane protein</topology>
    </subcellularLocation>
</comment>
<comment type="induction">
    <text>Inducible by 2-thiouric acid, and highly repressible by ammonium.</text>
</comment>
<comment type="similarity">
    <text evidence="2">Belongs to the nucleobase:cation symporter-2 (NCS2) (TC 2.A.40) family.</text>
</comment>
<gene>
    <name type="primary">uapC</name>
    <name type="ORF">AN6730</name>
</gene>
<keyword id="KW-0472">Membrane</keyword>
<keyword id="KW-1185">Reference proteome</keyword>
<keyword id="KW-0812">Transmembrane</keyword>
<keyword id="KW-1133">Transmembrane helix</keyword>
<keyword id="KW-0813">Transport</keyword>
<feature type="chain" id="PRO_0000165953" description="Purine permease">
    <location>
        <begin position="1"/>
        <end position="580"/>
    </location>
</feature>
<feature type="transmembrane region" description="Helical" evidence="1">
    <location>
        <begin position="68"/>
        <end position="88"/>
    </location>
</feature>
<feature type="transmembrane region" description="Helical" evidence="1">
    <location>
        <begin position="107"/>
        <end position="127"/>
    </location>
</feature>
<feature type="transmembrane region" description="Helical" evidence="1">
    <location>
        <begin position="136"/>
        <end position="156"/>
    </location>
</feature>
<feature type="transmembrane region" description="Helical" evidence="1">
    <location>
        <begin position="184"/>
        <end position="204"/>
    </location>
</feature>
<feature type="transmembrane region" description="Helical" evidence="1">
    <location>
        <begin position="211"/>
        <end position="231"/>
    </location>
</feature>
<feature type="transmembrane region" description="Helical" evidence="1">
    <location>
        <begin position="263"/>
        <end position="283"/>
    </location>
</feature>
<feature type="transmembrane region" description="Helical" evidence="1">
    <location>
        <begin position="294"/>
        <end position="314"/>
    </location>
</feature>
<feature type="transmembrane region" description="Helical" evidence="1">
    <location>
        <begin position="385"/>
        <end position="405"/>
    </location>
</feature>
<feature type="transmembrane region" description="Helical" evidence="1">
    <location>
        <begin position="426"/>
        <end position="446"/>
    </location>
</feature>
<feature type="transmembrane region" description="Helical" evidence="1">
    <location>
        <begin position="447"/>
        <end position="467"/>
    </location>
</feature>
<feature type="transmembrane region" description="Helical" evidence="1">
    <location>
        <begin position="481"/>
        <end position="501"/>
    </location>
</feature>
<feature type="transmembrane region" description="Helical" evidence="1">
    <location>
        <begin position="522"/>
        <end position="542"/>
    </location>
</feature>
<feature type="sequence conflict" description="In Ref. 1; CAA56190." evidence="2" ref="1">
    <original>A</original>
    <variation>G</variation>
    <location>
        <position position="151"/>
    </location>
</feature>
<feature type="sequence conflict" description="In Ref. 1; CAA56190." evidence="2" ref="1">
    <original>R</original>
    <variation>P</variation>
    <location>
        <position position="416"/>
    </location>
</feature>
<feature type="sequence conflict" description="In Ref. 1; CAA56190." evidence="2" ref="1">
    <original>S</original>
    <variation>C</variation>
    <location>
        <position position="569"/>
    </location>
</feature>
<evidence type="ECO:0000255" key="1"/>
<evidence type="ECO:0000305" key="2"/>
<sequence length="580" mass="61349">MDGPDQIGPDVRPRRTFGDRVRRAARAFTTRDGLIGDYDYGFLFTPRLPFVKQKRRAAPFFGLEDKIPLVLALLLGLQHALAMLAGVITPPILLAGSSGANFGADESQYLVSTSLIVSGLLSAVQMFRLHVYKTRYYVGTGLVSVVGTSFATITVATGTFNQMYSTGYCPVDGSGNRLPCPKGYGALLATSCLCSLLEIGLSFMSSRLLKALFPPIVTGPTVFLIGASLIGNAMKDWAGGSGTCSSNPGNGALCPSADAPHPLPWGSAEFIGLGFLVFATIILCERFGSPIMKSCAVIVGLLVGCIVAAACGYFDRSGIDAAPVASFIWVKTFPLTIYAPLILPLLAVYMVIMMESIGDITATCDVSRLQVEGATFDSRIQGGVLGNGITCLLAGLCTITPMSVFAQNNGVIALTRCANRKAGYCCCFFLVVMGIFAKFAAALVAIPSSVLGGMTTFLFSSVAISGVRIMCSVDWTRRNRFILTASFAVGMAATLVPDWFSYFFTYSGDNHALEGLLQAVELVMANGFAVTGFLGLLLNLILPEDMEEDVVESEEDYEATTVVGMQGGSEPGSSGQNVKA</sequence>
<protein>
    <recommendedName>
        <fullName>Purine permease</fullName>
    </recommendedName>
</protein>
<reference key="1">
    <citation type="journal article" date="1995" name="J. Biol. Chem.">
        <title>Genetic and molecular characterization of a gene encoding a wide specificity purine permease of Aspergillus nidulans reveals a novel family of transporters conserved in prokaryotes and eukaryotes.</title>
        <authorList>
            <person name="Diallinas G."/>
            <person name="Gorfinkiel L."/>
            <person name="Arst H.N. Jr."/>
            <person name="Cecchetto G."/>
            <person name="Scazzocchio C."/>
        </authorList>
    </citation>
    <scope>NUCLEOTIDE SEQUENCE [GENOMIC DNA]</scope>
</reference>
<reference key="2">
    <citation type="journal article" date="2005" name="Nature">
        <title>Sequencing of Aspergillus nidulans and comparative analysis with A. fumigatus and A. oryzae.</title>
        <authorList>
            <person name="Galagan J.E."/>
            <person name="Calvo S.E."/>
            <person name="Cuomo C."/>
            <person name="Ma L.-J."/>
            <person name="Wortman J.R."/>
            <person name="Batzoglou S."/>
            <person name="Lee S.-I."/>
            <person name="Bastuerkmen M."/>
            <person name="Spevak C.C."/>
            <person name="Clutterbuck J."/>
            <person name="Kapitonov V."/>
            <person name="Jurka J."/>
            <person name="Scazzocchio C."/>
            <person name="Farman M.L."/>
            <person name="Butler J."/>
            <person name="Purcell S."/>
            <person name="Harris S."/>
            <person name="Braus G.H."/>
            <person name="Draht O."/>
            <person name="Busch S."/>
            <person name="D'Enfert C."/>
            <person name="Bouchier C."/>
            <person name="Goldman G.H."/>
            <person name="Bell-Pedersen D."/>
            <person name="Griffiths-Jones S."/>
            <person name="Doonan J.H."/>
            <person name="Yu J."/>
            <person name="Vienken K."/>
            <person name="Pain A."/>
            <person name="Freitag M."/>
            <person name="Selker E.U."/>
            <person name="Archer D.B."/>
            <person name="Penalva M.A."/>
            <person name="Oakley B.R."/>
            <person name="Momany M."/>
            <person name="Tanaka T."/>
            <person name="Kumagai T."/>
            <person name="Asai K."/>
            <person name="Machida M."/>
            <person name="Nierman W.C."/>
            <person name="Denning D.W."/>
            <person name="Caddick M.X."/>
            <person name="Hynes M."/>
            <person name="Paoletti M."/>
            <person name="Fischer R."/>
            <person name="Miller B.L."/>
            <person name="Dyer P.S."/>
            <person name="Sachs M.S."/>
            <person name="Osmani S.A."/>
            <person name="Birren B.W."/>
        </authorList>
    </citation>
    <scope>NUCLEOTIDE SEQUENCE [LARGE SCALE GENOMIC DNA]</scope>
    <source>
        <strain>FGSC A4 / ATCC 38163 / CBS 112.46 / NRRL 194 / M139</strain>
    </source>
</reference>
<reference key="3">
    <citation type="journal article" date="2009" name="Fungal Genet. Biol.">
        <title>The 2008 update of the Aspergillus nidulans genome annotation: a community effort.</title>
        <authorList>
            <person name="Wortman J.R."/>
            <person name="Gilsenan J.M."/>
            <person name="Joardar V."/>
            <person name="Deegan J."/>
            <person name="Clutterbuck J."/>
            <person name="Andersen M.R."/>
            <person name="Archer D."/>
            <person name="Bencina M."/>
            <person name="Braus G."/>
            <person name="Coutinho P."/>
            <person name="von Dohren H."/>
            <person name="Doonan J."/>
            <person name="Driessen A.J."/>
            <person name="Durek P."/>
            <person name="Espeso E."/>
            <person name="Fekete E."/>
            <person name="Flipphi M."/>
            <person name="Estrada C.G."/>
            <person name="Geysens S."/>
            <person name="Goldman G."/>
            <person name="de Groot P.W."/>
            <person name="Hansen K."/>
            <person name="Harris S.D."/>
            <person name="Heinekamp T."/>
            <person name="Helmstaedt K."/>
            <person name="Henrissat B."/>
            <person name="Hofmann G."/>
            <person name="Homan T."/>
            <person name="Horio T."/>
            <person name="Horiuchi H."/>
            <person name="James S."/>
            <person name="Jones M."/>
            <person name="Karaffa L."/>
            <person name="Karanyi Z."/>
            <person name="Kato M."/>
            <person name="Keller N."/>
            <person name="Kelly D.E."/>
            <person name="Kiel J.A."/>
            <person name="Kim J.M."/>
            <person name="van der Klei I.J."/>
            <person name="Klis F.M."/>
            <person name="Kovalchuk A."/>
            <person name="Krasevec N."/>
            <person name="Kubicek C.P."/>
            <person name="Liu B."/>
            <person name="Maccabe A."/>
            <person name="Meyer V."/>
            <person name="Mirabito P."/>
            <person name="Miskei M."/>
            <person name="Mos M."/>
            <person name="Mullins J."/>
            <person name="Nelson D.R."/>
            <person name="Nielsen J."/>
            <person name="Oakley B.R."/>
            <person name="Osmani S.A."/>
            <person name="Pakula T."/>
            <person name="Paszewski A."/>
            <person name="Paulsen I."/>
            <person name="Pilsyk S."/>
            <person name="Pocsi I."/>
            <person name="Punt P.J."/>
            <person name="Ram A.F."/>
            <person name="Ren Q."/>
            <person name="Robellet X."/>
            <person name="Robson G."/>
            <person name="Seiboth B."/>
            <person name="van Solingen P."/>
            <person name="Specht T."/>
            <person name="Sun J."/>
            <person name="Taheri-Talesh N."/>
            <person name="Takeshita N."/>
            <person name="Ussery D."/>
            <person name="vanKuyk P.A."/>
            <person name="Visser H."/>
            <person name="van de Vondervoort P.J."/>
            <person name="de Vries R.P."/>
            <person name="Walton J."/>
            <person name="Xiang X."/>
            <person name="Xiong Y."/>
            <person name="Zeng A.P."/>
            <person name="Brandt B.W."/>
            <person name="Cornell M.J."/>
            <person name="van den Hondel C.A."/>
            <person name="Visser J."/>
            <person name="Oliver S.G."/>
            <person name="Turner G."/>
        </authorList>
    </citation>
    <scope>GENOME REANNOTATION</scope>
    <source>
        <strain>FGSC A4 / ATCC 38163 / CBS 112.46 / NRRL 194 / M139</strain>
    </source>
</reference>
<name>UAPC_EMENI</name>
<proteinExistence type="evidence at transcript level"/>
<accession>P48777</accession>
<accession>C8V1W9</accession>
<accession>Q5AYA0</accession>